<reference evidence="10" key="1">
    <citation type="journal article" date="2020" name="PLoS Genet.">
        <title>Dramatically diverse Schizosaccharomyces pombe wtf meiotic drivers all display high gamete-killing efficiency.</title>
        <authorList>
            <person name="Bravo Nunez M.A."/>
            <person name="Sabbarini I.M."/>
            <person name="Eickbush M.T."/>
            <person name="Liang Y."/>
            <person name="Lange J.J."/>
            <person name="Kent A.M."/>
            <person name="Zanders S.E."/>
        </authorList>
    </citation>
    <scope>NUCLEOTIDE SEQUENCE [GENOMIC DNA]</scope>
    <scope>FUNCTION</scope>
    <scope>ALTERNATIVE INITIATION (ISOFORMS 1 AND 2)</scope>
    <source>
        <strain evidence="10">FY29033</strain>
    </source>
</reference>
<reference key="2">
    <citation type="journal article" date="2020" name="Elife">
        <title>Atypical meiosis can be adaptive in outcrossed Schizosaccharomyces pombe due to wtf meiotic drivers.</title>
        <authorList>
            <person name="Bravo Nunez M.A."/>
            <person name="Sabbarini I.M."/>
            <person name="Eide L.E."/>
            <person name="Unckless R.L."/>
            <person name="Zanders S.E."/>
        </authorList>
    </citation>
    <scope>FUNCTION</scope>
    <source>
        <strain evidence="8">FY29033</strain>
    </source>
</reference>
<keyword id="KW-0024">Alternative initiation</keyword>
<keyword id="KW-0963">Cytoplasm</keyword>
<keyword id="KW-0256">Endoplasmic reticulum</keyword>
<keyword id="KW-0472">Membrane</keyword>
<keyword id="KW-0800">Toxin</keyword>
<keyword id="KW-0812">Transmembrane</keyword>
<keyword id="KW-1133">Transmembrane helix</keyword>
<keyword id="KW-0926">Vacuole</keyword>
<evidence type="ECO:0000250" key="1">
    <source>
        <dbReference type="UniProtKB" id="A0A218N034"/>
    </source>
</evidence>
<evidence type="ECO:0000250" key="2">
    <source>
        <dbReference type="UniProtKB" id="O74420"/>
    </source>
</evidence>
<evidence type="ECO:0000255" key="3"/>
<evidence type="ECO:0000256" key="4">
    <source>
        <dbReference type="SAM" id="MobiDB-lite"/>
    </source>
</evidence>
<evidence type="ECO:0000269" key="5">
    <source>
    </source>
</evidence>
<evidence type="ECO:0000269" key="6">
    <source>
    </source>
</evidence>
<evidence type="ECO:0000303" key="7">
    <source>
    </source>
</evidence>
<evidence type="ECO:0000303" key="8">
    <source>
    </source>
</evidence>
<evidence type="ECO:0000305" key="9"/>
<evidence type="ECO:0000312" key="10">
    <source>
        <dbReference type="EMBL" id="QBL54290.1"/>
    </source>
</evidence>
<protein>
    <recommendedName>
        <fullName evidence="7">Meiotic driver wtf36</fullName>
    </recommendedName>
</protein>
<feature type="chain" id="PRO_0000452274" description="Meiotic driver wtf36">
    <location>
        <begin position="1"/>
        <end position="415"/>
    </location>
</feature>
<feature type="transmembrane region" description="Helical" evidence="3">
    <location>
        <begin position="105"/>
        <end position="125"/>
    </location>
</feature>
<feature type="transmembrane region" description="Helical" evidence="3">
    <location>
        <begin position="142"/>
        <end position="162"/>
    </location>
</feature>
<feature type="transmembrane region" description="Helical" evidence="3">
    <location>
        <begin position="169"/>
        <end position="189"/>
    </location>
</feature>
<feature type="transmembrane region" description="Helical" evidence="3">
    <location>
        <begin position="205"/>
        <end position="225"/>
    </location>
</feature>
<feature type="transmembrane region" description="Helical" evidence="3">
    <location>
        <begin position="240"/>
        <end position="260"/>
    </location>
</feature>
<feature type="transmembrane region" description="Helical" evidence="3">
    <location>
        <begin position="274"/>
        <end position="294"/>
    </location>
</feature>
<feature type="transmembrane region" description="Helical" evidence="3">
    <location>
        <begin position="298"/>
        <end position="318"/>
    </location>
</feature>
<feature type="region of interest" description="Disordered" evidence="4">
    <location>
        <begin position="1"/>
        <end position="49"/>
    </location>
</feature>
<feature type="region of interest" description="Disordered" evidence="4">
    <location>
        <begin position="67"/>
        <end position="99"/>
    </location>
</feature>
<feature type="compositionally biased region" description="Basic and acidic residues" evidence="4">
    <location>
        <begin position="11"/>
        <end position="29"/>
    </location>
</feature>
<feature type="splice variant" id="VSP_060941" description="In isoform 2." evidence="5">
    <location>
        <begin position="1"/>
        <end position="52"/>
    </location>
</feature>
<sequence length="415" mass="46573">MKNKYYPLRSSMDEMSAKNDNEIDLEKGPLPEYNSEDGSTLPPYSDLNNPKQMGQNITKLFNWNKSTTPPDYDENRLHITDEGNNPPNTHRENHSSGTADNSSPFLIKLLISFTPIVLLNAPAVCYLKYKDAFFKNYGAAEWTLFGFWCLVCTLALIFLTYFYETWTKAVKVTVIFLAQCVKVTVIFLAKCVKVTVIFLAKCVKVTAISLAKCIKVTAIFLAQCVKVTAVGLYNSREKWVVIIWLLWVVICYTLFLRSKFGNLNLNKALICSTCSISAALLLFLLYVRLPFWTLKHMFSGLFQVLGVQSCVVIVTKGLTYLFDKHIDATGYEIEASSLFVIGNFLFFYEMECPGALKRMPKFIRNGIASFLEGIGNIGNAIGRIGNAIGRIGNAFRGANDNNDIPLGEMEVESEV</sequence>
<dbReference type="EMBL" id="MH837224">
    <property type="protein sequence ID" value="QBL54290.1"/>
    <property type="molecule type" value="Genomic_DNA"/>
</dbReference>
<dbReference type="SMR" id="A0A482AQK7"/>
<dbReference type="VEuPathDB" id="FungiDB:SPCC970.11c"/>
<dbReference type="GO" id="GO:0072324">
    <property type="term" value="C:ascus epiplasm"/>
    <property type="evidence" value="ECO:0000305"/>
    <property type="project" value="UniProtKB"/>
</dbReference>
<dbReference type="GO" id="GO:0005737">
    <property type="term" value="C:cytoplasm"/>
    <property type="evidence" value="ECO:0000305"/>
    <property type="project" value="UniProtKB"/>
</dbReference>
<dbReference type="GO" id="GO:0005789">
    <property type="term" value="C:endoplasmic reticulum membrane"/>
    <property type="evidence" value="ECO:0007669"/>
    <property type="project" value="UniProtKB-SubCell"/>
</dbReference>
<dbReference type="GO" id="GO:0005774">
    <property type="term" value="C:vacuolar membrane"/>
    <property type="evidence" value="ECO:0007669"/>
    <property type="project" value="UniProtKB-SubCell"/>
</dbReference>
<dbReference type="GO" id="GO:0110134">
    <property type="term" value="P:meiotic drive"/>
    <property type="evidence" value="ECO:0000314"/>
    <property type="project" value="UniProtKB"/>
</dbReference>
<dbReference type="InterPro" id="IPR004982">
    <property type="entry name" value="WTF"/>
</dbReference>
<dbReference type="Pfam" id="PF03303">
    <property type="entry name" value="WTF"/>
    <property type="match status" value="2"/>
</dbReference>
<name>WTF36_SCHPM</name>
<organism evidence="10">
    <name type="scientific">Schizosaccharomyces pombe</name>
    <name type="common">Fission yeast</name>
    <dbReference type="NCBI Taxonomy" id="4896"/>
    <lineage>
        <taxon>Eukaryota</taxon>
        <taxon>Fungi</taxon>
        <taxon>Dikarya</taxon>
        <taxon>Ascomycota</taxon>
        <taxon>Taphrinomycotina</taxon>
        <taxon>Schizosaccharomycetes</taxon>
        <taxon>Schizosaccharomycetales</taxon>
        <taxon>Schizosaccharomycetaceae</taxon>
        <taxon>Schizosaccharomyces</taxon>
    </lineage>
</organism>
<proteinExistence type="inferred from homology"/>
<accession>A0A482AQK7</accession>
<comment type="function">
    <text evidence="5 6">Promotes unequal transmission of alleles from the parental zygote to progeny spores by acting as poison/antidote system where the poison and antidote proteins are produced from the same locus; the poison component is trans-acting and targets all spores within an ascus whereas the antidote component is spore-specific, leading to poisoning of all progeny that do not inherit the allele.</text>
</comment>
<comment type="function">
    <molecule>Isoform 1</molecule>
    <text evidence="1">Localizes isoform 2 to the vacuole thereby facilitating its degradation.</text>
</comment>
<comment type="function">
    <molecule>Isoform 2</molecule>
    <text evidence="1">Forms toxic aggregates that disrupt spore maturation.</text>
</comment>
<comment type="subunit">
    <text evidence="1 2">Homomer (By similarity). Forms protein aggregates (By similarity). The two isoforms can interact with each other and with themselves (By similarity). High sequence similarity is required for their interaction (By similarity).</text>
</comment>
<comment type="subcellular location">
    <molecule>Isoform 1</molecule>
    <subcellularLocation>
        <location evidence="1 3">Spore membrane</location>
        <topology evidence="3">Multi-pass membrane protein</topology>
    </subcellularLocation>
    <subcellularLocation>
        <location evidence="1 3">Vacuole membrane</location>
        <topology evidence="3">Multi-pass membrane protein</topology>
    </subcellularLocation>
    <text evidence="1">Contained within spores expressing the isoform and localizes isoform 2 to the vacuole.</text>
</comment>
<comment type="subcellular location">
    <molecule>Isoform 2</molecule>
    <subcellularLocation>
        <location evidence="1">Ascus epiplasm</location>
    </subcellularLocation>
    <subcellularLocation>
        <location evidence="1">Cytoplasm</location>
    </subcellularLocation>
    <subcellularLocation>
        <location evidence="1 3">Spore membrane</location>
        <topology evidence="3">Multi-pass membrane protein</topology>
    </subcellularLocation>
    <subcellularLocation>
        <location evidence="1 3">Vacuole membrane</location>
        <topology evidence="3">Multi-pass membrane protein</topology>
    </subcellularLocation>
    <subcellularLocation>
        <location evidence="1 3">Endoplasmic reticulum membrane</location>
        <topology evidence="3">Multi-pass membrane protein</topology>
    </subcellularLocation>
    <text evidence="1">Localizes in trans to all spores within an ascus. Localization to the spore vacuole is dependent on isoform 1.</text>
</comment>
<comment type="alternative products">
    <event type="alternative initiation"/>
    <isoform>
        <id>A0A482AQK7-1</id>
        <name>1</name>
        <name evidence="7">Antidote</name>
        <name evidence="9">Suppressor</name>
        <sequence type="displayed"/>
    </isoform>
    <isoform>
        <id>A0A482AQK7-2</id>
        <name>2</name>
        <name evidence="7">Poison</name>
        <sequence type="described" ref="VSP_060941"/>
    </isoform>
</comment>
<comment type="similarity">
    <text evidence="9">Belongs to the WTF family.</text>
</comment>
<gene>
    <name evidence="10" type="primary">wtf36</name>
</gene>